<sequence>MANIYYDADCDLSSLKGKTIAVIGYGSQGHAQAQNMKDSGLKVIIGLKEGSKSIQDAKNAGFEVYSVAEASQKADVIQILAPDTIQADLYKKDIEPNLKKGNALVFSHGFNIHYDFIKPPEEVDVYMVAPKGPGHLVRRVYTEGGGVPCLIAVHQDSTGEAKKRALAHAAGVGGGRAGILETSFREETETDLFGEQVVLCGGLSNLIMAGFETLTEAGYDPEIAYFECLHEVKLITDLIYEGGLARMRFSISDTAEYGDYVSGPRVIDPGVKQRMKEVLNDIQKDKGAKFATNWMAETKAGYPNFKNMRDKNAAHPIESVGKKLRSMMKWLSK</sequence>
<dbReference type="EC" id="1.1.1.86" evidence="1"/>
<dbReference type="EMBL" id="CP000350">
    <property type="protein sequence ID" value="ABJ77314.1"/>
    <property type="molecule type" value="Genomic_DNA"/>
</dbReference>
<dbReference type="RefSeq" id="WP_002734957.1">
    <property type="nucleotide sequence ID" value="NC_008510.1"/>
</dbReference>
<dbReference type="SMR" id="Q04P56"/>
<dbReference type="GeneID" id="61175363"/>
<dbReference type="KEGG" id="lbj:LBJ_2914"/>
<dbReference type="HOGENOM" id="CLU_033821_0_1_12"/>
<dbReference type="UniPathway" id="UPA00047">
    <property type="reaction ID" value="UER00056"/>
</dbReference>
<dbReference type="UniPathway" id="UPA00049">
    <property type="reaction ID" value="UER00060"/>
</dbReference>
<dbReference type="Proteomes" id="UP000000656">
    <property type="component" value="Chromosome 1"/>
</dbReference>
<dbReference type="GO" id="GO:0005829">
    <property type="term" value="C:cytosol"/>
    <property type="evidence" value="ECO:0007669"/>
    <property type="project" value="TreeGrafter"/>
</dbReference>
<dbReference type="GO" id="GO:0004455">
    <property type="term" value="F:ketol-acid reductoisomerase activity"/>
    <property type="evidence" value="ECO:0007669"/>
    <property type="project" value="UniProtKB-UniRule"/>
</dbReference>
<dbReference type="GO" id="GO:0000287">
    <property type="term" value="F:magnesium ion binding"/>
    <property type="evidence" value="ECO:0007669"/>
    <property type="project" value="UniProtKB-UniRule"/>
</dbReference>
<dbReference type="GO" id="GO:0050661">
    <property type="term" value="F:NADP binding"/>
    <property type="evidence" value="ECO:0007669"/>
    <property type="project" value="InterPro"/>
</dbReference>
<dbReference type="GO" id="GO:0009097">
    <property type="term" value="P:isoleucine biosynthetic process"/>
    <property type="evidence" value="ECO:0007669"/>
    <property type="project" value="UniProtKB-UniRule"/>
</dbReference>
<dbReference type="GO" id="GO:0009099">
    <property type="term" value="P:L-valine biosynthetic process"/>
    <property type="evidence" value="ECO:0007669"/>
    <property type="project" value="UniProtKB-UniRule"/>
</dbReference>
<dbReference type="FunFam" id="3.40.50.720:FF:000023">
    <property type="entry name" value="Ketol-acid reductoisomerase (NADP(+))"/>
    <property type="match status" value="1"/>
</dbReference>
<dbReference type="Gene3D" id="6.10.240.10">
    <property type="match status" value="1"/>
</dbReference>
<dbReference type="Gene3D" id="3.40.50.720">
    <property type="entry name" value="NAD(P)-binding Rossmann-like Domain"/>
    <property type="match status" value="1"/>
</dbReference>
<dbReference type="HAMAP" id="MF_00435">
    <property type="entry name" value="IlvC"/>
    <property type="match status" value="1"/>
</dbReference>
<dbReference type="InterPro" id="IPR008927">
    <property type="entry name" value="6-PGluconate_DH-like_C_sf"/>
</dbReference>
<dbReference type="InterPro" id="IPR013023">
    <property type="entry name" value="KARI"/>
</dbReference>
<dbReference type="InterPro" id="IPR000506">
    <property type="entry name" value="KARI_C"/>
</dbReference>
<dbReference type="InterPro" id="IPR013116">
    <property type="entry name" value="KARI_N"/>
</dbReference>
<dbReference type="InterPro" id="IPR014359">
    <property type="entry name" value="KARI_prok"/>
</dbReference>
<dbReference type="InterPro" id="IPR036291">
    <property type="entry name" value="NAD(P)-bd_dom_sf"/>
</dbReference>
<dbReference type="NCBIfam" id="TIGR00465">
    <property type="entry name" value="ilvC"/>
    <property type="match status" value="1"/>
</dbReference>
<dbReference type="NCBIfam" id="NF004017">
    <property type="entry name" value="PRK05479.1"/>
    <property type="match status" value="1"/>
</dbReference>
<dbReference type="NCBIfam" id="NF009940">
    <property type="entry name" value="PRK13403.1"/>
    <property type="match status" value="1"/>
</dbReference>
<dbReference type="PANTHER" id="PTHR21371">
    <property type="entry name" value="KETOL-ACID REDUCTOISOMERASE, MITOCHONDRIAL"/>
    <property type="match status" value="1"/>
</dbReference>
<dbReference type="PANTHER" id="PTHR21371:SF1">
    <property type="entry name" value="KETOL-ACID REDUCTOISOMERASE, MITOCHONDRIAL"/>
    <property type="match status" value="1"/>
</dbReference>
<dbReference type="Pfam" id="PF01450">
    <property type="entry name" value="KARI_C"/>
    <property type="match status" value="1"/>
</dbReference>
<dbReference type="Pfam" id="PF07991">
    <property type="entry name" value="KARI_N"/>
    <property type="match status" value="1"/>
</dbReference>
<dbReference type="PIRSF" id="PIRSF000116">
    <property type="entry name" value="IlvC_gammaproteo"/>
    <property type="match status" value="1"/>
</dbReference>
<dbReference type="SUPFAM" id="SSF48179">
    <property type="entry name" value="6-phosphogluconate dehydrogenase C-terminal domain-like"/>
    <property type="match status" value="1"/>
</dbReference>
<dbReference type="SUPFAM" id="SSF51735">
    <property type="entry name" value="NAD(P)-binding Rossmann-fold domains"/>
    <property type="match status" value="1"/>
</dbReference>
<dbReference type="PROSITE" id="PS51851">
    <property type="entry name" value="KARI_C"/>
    <property type="match status" value="1"/>
</dbReference>
<dbReference type="PROSITE" id="PS51850">
    <property type="entry name" value="KARI_N"/>
    <property type="match status" value="1"/>
</dbReference>
<feature type="chain" id="PRO_1000072322" description="Ketol-acid reductoisomerase (NADP(+))">
    <location>
        <begin position="1"/>
        <end position="333"/>
    </location>
</feature>
<feature type="domain" description="KARI N-terminal Rossmann" evidence="2">
    <location>
        <begin position="2"/>
        <end position="182"/>
    </location>
</feature>
<feature type="domain" description="KARI C-terminal knotted" evidence="3">
    <location>
        <begin position="183"/>
        <end position="331"/>
    </location>
</feature>
<feature type="active site" evidence="1">
    <location>
        <position position="108"/>
    </location>
</feature>
<feature type="binding site" evidence="1">
    <location>
        <begin position="25"/>
        <end position="28"/>
    </location>
    <ligand>
        <name>NADP(+)</name>
        <dbReference type="ChEBI" id="CHEBI:58349"/>
    </ligand>
</feature>
<feature type="binding site" evidence="1">
    <location>
        <position position="48"/>
    </location>
    <ligand>
        <name>NADP(+)</name>
        <dbReference type="ChEBI" id="CHEBI:58349"/>
    </ligand>
</feature>
<feature type="binding site" evidence="1">
    <location>
        <position position="51"/>
    </location>
    <ligand>
        <name>NADP(+)</name>
        <dbReference type="ChEBI" id="CHEBI:58349"/>
    </ligand>
</feature>
<feature type="binding site" evidence="1">
    <location>
        <position position="53"/>
    </location>
    <ligand>
        <name>NADP(+)</name>
        <dbReference type="ChEBI" id="CHEBI:58349"/>
    </ligand>
</feature>
<feature type="binding site" evidence="1">
    <location>
        <begin position="83"/>
        <end position="86"/>
    </location>
    <ligand>
        <name>NADP(+)</name>
        <dbReference type="ChEBI" id="CHEBI:58349"/>
    </ligand>
</feature>
<feature type="binding site" evidence="1">
    <location>
        <position position="134"/>
    </location>
    <ligand>
        <name>NADP(+)</name>
        <dbReference type="ChEBI" id="CHEBI:58349"/>
    </ligand>
</feature>
<feature type="binding site" evidence="1">
    <location>
        <position position="191"/>
    </location>
    <ligand>
        <name>Mg(2+)</name>
        <dbReference type="ChEBI" id="CHEBI:18420"/>
        <label>1</label>
    </ligand>
</feature>
<feature type="binding site" evidence="1">
    <location>
        <position position="191"/>
    </location>
    <ligand>
        <name>Mg(2+)</name>
        <dbReference type="ChEBI" id="CHEBI:18420"/>
        <label>2</label>
    </ligand>
</feature>
<feature type="binding site" evidence="1">
    <location>
        <position position="195"/>
    </location>
    <ligand>
        <name>Mg(2+)</name>
        <dbReference type="ChEBI" id="CHEBI:18420"/>
        <label>1</label>
    </ligand>
</feature>
<feature type="binding site" evidence="1">
    <location>
        <position position="227"/>
    </location>
    <ligand>
        <name>Mg(2+)</name>
        <dbReference type="ChEBI" id="CHEBI:18420"/>
        <label>2</label>
    </ligand>
</feature>
<feature type="binding site" evidence="1">
    <location>
        <position position="231"/>
    </location>
    <ligand>
        <name>Mg(2+)</name>
        <dbReference type="ChEBI" id="CHEBI:18420"/>
        <label>2</label>
    </ligand>
</feature>
<feature type="binding site" evidence="1">
    <location>
        <position position="252"/>
    </location>
    <ligand>
        <name>substrate</name>
    </ligand>
</feature>
<accession>Q04P56</accession>
<reference key="1">
    <citation type="journal article" date="2006" name="Proc. Natl. Acad. Sci. U.S.A.">
        <title>Genome reduction in Leptospira borgpetersenii reflects limited transmission potential.</title>
        <authorList>
            <person name="Bulach D.M."/>
            <person name="Zuerner R.L."/>
            <person name="Wilson P."/>
            <person name="Seemann T."/>
            <person name="McGrath A."/>
            <person name="Cullen P.A."/>
            <person name="Davis J."/>
            <person name="Johnson M."/>
            <person name="Kuczek E."/>
            <person name="Alt D.P."/>
            <person name="Peterson-Burch B."/>
            <person name="Coppel R.L."/>
            <person name="Rood J.I."/>
            <person name="Davies J.K."/>
            <person name="Adler B."/>
        </authorList>
    </citation>
    <scope>NUCLEOTIDE SEQUENCE [LARGE SCALE GENOMIC DNA]</scope>
    <source>
        <strain>JB197</strain>
    </source>
</reference>
<proteinExistence type="inferred from homology"/>
<protein>
    <recommendedName>
        <fullName evidence="1">Ketol-acid reductoisomerase (NADP(+))</fullName>
        <shortName evidence="1">KARI</shortName>
        <ecNumber evidence="1">1.1.1.86</ecNumber>
    </recommendedName>
    <alternativeName>
        <fullName evidence="1">Acetohydroxy-acid isomeroreductase</fullName>
        <shortName evidence="1">AHIR</shortName>
    </alternativeName>
    <alternativeName>
        <fullName evidence="1">Alpha-keto-beta-hydroxylacyl reductoisomerase</fullName>
    </alternativeName>
    <alternativeName>
        <fullName evidence="1">Ketol-acid reductoisomerase type 1</fullName>
    </alternativeName>
    <alternativeName>
        <fullName evidence="1">Ketol-acid reductoisomerase type I</fullName>
    </alternativeName>
</protein>
<name>ILVC_LEPBJ</name>
<organism>
    <name type="scientific">Leptospira borgpetersenii serovar Hardjo-bovis (strain JB197)</name>
    <dbReference type="NCBI Taxonomy" id="355277"/>
    <lineage>
        <taxon>Bacteria</taxon>
        <taxon>Pseudomonadati</taxon>
        <taxon>Spirochaetota</taxon>
        <taxon>Spirochaetia</taxon>
        <taxon>Leptospirales</taxon>
        <taxon>Leptospiraceae</taxon>
        <taxon>Leptospira</taxon>
    </lineage>
</organism>
<keyword id="KW-0028">Amino-acid biosynthesis</keyword>
<keyword id="KW-0100">Branched-chain amino acid biosynthesis</keyword>
<keyword id="KW-0460">Magnesium</keyword>
<keyword id="KW-0479">Metal-binding</keyword>
<keyword id="KW-0521">NADP</keyword>
<keyword id="KW-0560">Oxidoreductase</keyword>
<gene>
    <name evidence="1" type="primary">ilvC</name>
    <name type="ordered locus">LBJ_2914</name>
</gene>
<comment type="function">
    <text evidence="1">Involved in the biosynthesis of branched-chain amino acids (BCAA). Catalyzes an alkyl-migration followed by a ketol-acid reduction of (S)-2-acetolactate (S2AL) to yield (R)-2,3-dihydroxy-isovalerate. In the isomerase reaction, S2AL is rearranged via a Mg-dependent methyl migration to produce 3-hydroxy-3-methyl-2-ketobutyrate (HMKB). In the reductase reaction, this 2-ketoacid undergoes a metal-dependent reduction by NADPH to yield (R)-2,3-dihydroxy-isovalerate.</text>
</comment>
<comment type="catalytic activity">
    <reaction evidence="1">
        <text>(2R)-2,3-dihydroxy-3-methylbutanoate + NADP(+) = (2S)-2-acetolactate + NADPH + H(+)</text>
        <dbReference type="Rhea" id="RHEA:22068"/>
        <dbReference type="ChEBI" id="CHEBI:15378"/>
        <dbReference type="ChEBI" id="CHEBI:49072"/>
        <dbReference type="ChEBI" id="CHEBI:57783"/>
        <dbReference type="ChEBI" id="CHEBI:58349"/>
        <dbReference type="ChEBI" id="CHEBI:58476"/>
        <dbReference type="EC" id="1.1.1.86"/>
    </reaction>
</comment>
<comment type="catalytic activity">
    <reaction evidence="1">
        <text>(2R,3R)-2,3-dihydroxy-3-methylpentanoate + NADP(+) = (S)-2-ethyl-2-hydroxy-3-oxobutanoate + NADPH + H(+)</text>
        <dbReference type="Rhea" id="RHEA:13493"/>
        <dbReference type="ChEBI" id="CHEBI:15378"/>
        <dbReference type="ChEBI" id="CHEBI:49256"/>
        <dbReference type="ChEBI" id="CHEBI:49258"/>
        <dbReference type="ChEBI" id="CHEBI:57783"/>
        <dbReference type="ChEBI" id="CHEBI:58349"/>
        <dbReference type="EC" id="1.1.1.86"/>
    </reaction>
</comment>
<comment type="cofactor">
    <cofactor evidence="1">
        <name>Mg(2+)</name>
        <dbReference type="ChEBI" id="CHEBI:18420"/>
    </cofactor>
    <text evidence="1">Binds 2 magnesium ions per subunit.</text>
</comment>
<comment type="pathway">
    <text evidence="1">Amino-acid biosynthesis; L-isoleucine biosynthesis; L-isoleucine from 2-oxobutanoate: step 2/4.</text>
</comment>
<comment type="pathway">
    <text evidence="1">Amino-acid biosynthesis; L-valine biosynthesis; L-valine from pyruvate: step 2/4.</text>
</comment>
<comment type="similarity">
    <text evidence="1">Belongs to the ketol-acid reductoisomerase family.</text>
</comment>
<evidence type="ECO:0000255" key="1">
    <source>
        <dbReference type="HAMAP-Rule" id="MF_00435"/>
    </source>
</evidence>
<evidence type="ECO:0000255" key="2">
    <source>
        <dbReference type="PROSITE-ProRule" id="PRU01197"/>
    </source>
</evidence>
<evidence type="ECO:0000255" key="3">
    <source>
        <dbReference type="PROSITE-ProRule" id="PRU01198"/>
    </source>
</evidence>